<sequence length="139" mass="15000">MRAAAPALSLLLCCTAPANAQQPEPDCRKAVSQMDLNICADQDYRAADAELNKTYRLVVAAMQATDKELGDIDAAYAGALEALKKAQRAWIGYRDGQCELAGFEARGGSMEPMLVSGCLAELTRKRTAELKELMESAEN</sequence>
<evidence type="ECO:0000305" key="1"/>
<gene>
    <name type="ordered locus">R02472</name>
    <name type="ORF">SMc02046</name>
</gene>
<comment type="similarity">
    <text evidence="1">To E.coli YecT.</text>
</comment>
<name>Y2472_RHIME</name>
<feature type="chain" id="PRO_0000169089" description="Uncharacterized protein R02472">
    <location>
        <begin position="1"/>
        <end position="139"/>
    </location>
</feature>
<reference key="1">
    <citation type="journal article" date="1994" name="Mol. Gen. Genet.">
        <title>A 4.6 kb DNA region of Rhizobium meliloti involved in determining urease and hydrogenase activities carries the structural genes for urease (ureA, ureB, ureC) interrupted by other open reading frames.</title>
        <authorList>
            <person name="Miksch G."/>
            <person name="Arnold W."/>
            <person name="Lentzsch P."/>
            <person name="Priefer U.B."/>
            <person name="Puehler A."/>
        </authorList>
    </citation>
    <scope>NUCLEOTIDE SEQUENCE [GENOMIC DNA]</scope>
    <source>
        <strain>AK631</strain>
    </source>
</reference>
<reference key="2">
    <citation type="journal article" date="2001" name="Proc. Natl. Acad. Sci. U.S.A.">
        <title>Analysis of the chromosome sequence of the legume symbiont Sinorhizobium meliloti strain 1021.</title>
        <authorList>
            <person name="Capela D."/>
            <person name="Barloy-Hubler F."/>
            <person name="Gouzy J."/>
            <person name="Bothe G."/>
            <person name="Ampe F."/>
            <person name="Batut J."/>
            <person name="Boistard P."/>
            <person name="Becker A."/>
            <person name="Boutry M."/>
            <person name="Cadieu E."/>
            <person name="Dreano S."/>
            <person name="Gloux S."/>
            <person name="Godrie T."/>
            <person name="Goffeau A."/>
            <person name="Kahn D."/>
            <person name="Kiss E."/>
            <person name="Lelaure V."/>
            <person name="Masuy D."/>
            <person name="Pohl T."/>
            <person name="Portetelle D."/>
            <person name="Puehler A."/>
            <person name="Purnelle B."/>
            <person name="Ramsperger U."/>
            <person name="Renard C."/>
            <person name="Thebault P."/>
            <person name="Vandenbol M."/>
            <person name="Weidner S."/>
            <person name="Galibert F."/>
        </authorList>
    </citation>
    <scope>NUCLEOTIDE SEQUENCE [LARGE SCALE GENOMIC DNA]</scope>
    <source>
        <strain>1021</strain>
    </source>
</reference>
<reference key="3">
    <citation type="journal article" date="2001" name="Science">
        <title>The composite genome of the legume symbiont Sinorhizobium meliloti.</title>
        <authorList>
            <person name="Galibert F."/>
            <person name="Finan T.M."/>
            <person name="Long S.R."/>
            <person name="Puehler A."/>
            <person name="Abola P."/>
            <person name="Ampe F."/>
            <person name="Barloy-Hubler F."/>
            <person name="Barnett M.J."/>
            <person name="Becker A."/>
            <person name="Boistard P."/>
            <person name="Bothe G."/>
            <person name="Boutry M."/>
            <person name="Bowser L."/>
            <person name="Buhrmester J."/>
            <person name="Cadieu E."/>
            <person name="Capela D."/>
            <person name="Chain P."/>
            <person name="Cowie A."/>
            <person name="Davis R.W."/>
            <person name="Dreano S."/>
            <person name="Federspiel N.A."/>
            <person name="Fisher R.F."/>
            <person name="Gloux S."/>
            <person name="Godrie T."/>
            <person name="Goffeau A."/>
            <person name="Golding B."/>
            <person name="Gouzy J."/>
            <person name="Gurjal M."/>
            <person name="Hernandez-Lucas I."/>
            <person name="Hong A."/>
            <person name="Huizar L."/>
            <person name="Hyman R.W."/>
            <person name="Jones T."/>
            <person name="Kahn D."/>
            <person name="Kahn M.L."/>
            <person name="Kalman S."/>
            <person name="Keating D.H."/>
            <person name="Kiss E."/>
            <person name="Komp C."/>
            <person name="Lelaure V."/>
            <person name="Masuy D."/>
            <person name="Palm C."/>
            <person name="Peck M.C."/>
            <person name="Pohl T.M."/>
            <person name="Portetelle D."/>
            <person name="Purnelle B."/>
            <person name="Ramsperger U."/>
            <person name="Surzycki R."/>
            <person name="Thebault P."/>
            <person name="Vandenbol M."/>
            <person name="Vorhoelter F.J."/>
            <person name="Weidner S."/>
            <person name="Wells D.H."/>
            <person name="Wong K."/>
            <person name="Yeh K.-C."/>
            <person name="Batut J."/>
        </authorList>
    </citation>
    <scope>NUCLEOTIDE SEQUENCE [LARGE SCALE GENOMIC DNA]</scope>
    <source>
        <strain>1021</strain>
    </source>
</reference>
<organism>
    <name type="scientific">Rhizobium meliloti (strain 1021)</name>
    <name type="common">Ensifer meliloti</name>
    <name type="synonym">Sinorhizobium meliloti</name>
    <dbReference type="NCBI Taxonomy" id="266834"/>
    <lineage>
        <taxon>Bacteria</taxon>
        <taxon>Pseudomonadati</taxon>
        <taxon>Pseudomonadota</taxon>
        <taxon>Alphaproteobacteria</taxon>
        <taxon>Hyphomicrobiales</taxon>
        <taxon>Rhizobiaceae</taxon>
        <taxon>Sinorhizobium/Ensifer group</taxon>
        <taxon>Sinorhizobium</taxon>
    </lineage>
</organism>
<accession>P42879</accession>
<protein>
    <recommendedName>
        <fullName>Uncharacterized protein R02472</fullName>
    </recommendedName>
</protein>
<dbReference type="EMBL" id="S69145">
    <property type="protein sequence ID" value="AAB30137.1"/>
    <property type="molecule type" value="Genomic_DNA"/>
</dbReference>
<dbReference type="EMBL" id="AL591688">
    <property type="protein sequence ID" value="CAC47051.1"/>
    <property type="molecule type" value="Genomic_DNA"/>
</dbReference>
<dbReference type="PIR" id="S42605">
    <property type="entry name" value="S42605"/>
</dbReference>
<dbReference type="RefSeq" id="NP_386578.1">
    <property type="nucleotide sequence ID" value="NC_003047.1"/>
</dbReference>
<dbReference type="RefSeq" id="WP_010969963.1">
    <property type="nucleotide sequence ID" value="NC_003047.1"/>
</dbReference>
<dbReference type="SMR" id="P42879"/>
<dbReference type="DNASU" id="1234140"/>
<dbReference type="EnsemblBacteria" id="CAC47051">
    <property type="protein sequence ID" value="CAC47051"/>
    <property type="gene ID" value="SMc02046"/>
</dbReference>
<dbReference type="KEGG" id="sme:SMc02046"/>
<dbReference type="PATRIC" id="fig|266834.11.peg.3961"/>
<dbReference type="eggNOG" id="COG3755">
    <property type="taxonomic scope" value="Bacteria"/>
</dbReference>
<dbReference type="HOGENOM" id="CLU_128596_4_1_5"/>
<dbReference type="OrthoDB" id="7340239at2"/>
<dbReference type="Proteomes" id="UP000001976">
    <property type="component" value="Chromosome"/>
</dbReference>
<dbReference type="Gene3D" id="1.20.1270.180">
    <property type="match status" value="1"/>
</dbReference>
<dbReference type="InterPro" id="IPR009739">
    <property type="entry name" value="LprI-like_N"/>
</dbReference>
<dbReference type="PANTHER" id="PTHR39176:SF1">
    <property type="entry name" value="PERIPLASMIC PROTEIN"/>
    <property type="match status" value="1"/>
</dbReference>
<dbReference type="PANTHER" id="PTHR39176">
    <property type="entry name" value="PERIPLASMIC PROTEIN-RELATED"/>
    <property type="match status" value="1"/>
</dbReference>
<dbReference type="Pfam" id="PF07007">
    <property type="entry name" value="LprI"/>
    <property type="match status" value="1"/>
</dbReference>
<keyword id="KW-1185">Reference proteome</keyword>
<proteinExistence type="predicted"/>